<gene>
    <name type="primary">ATP6V0D1</name>
    <name type="synonym">ATP6D</name>
    <name type="synonym">VPATPD</name>
</gene>
<feature type="chain" id="PRO_0000119349" description="V-type proton ATPase subunit d 1">
    <location>
        <begin position="1"/>
        <end position="351"/>
    </location>
</feature>
<feature type="modified residue" description="Phosphotyrosine" evidence="1">
    <location>
        <position position="270"/>
    </location>
</feature>
<feature type="modified residue" description="Phosphoserine" evidence="1">
    <location>
        <position position="283"/>
    </location>
</feature>
<feature type="strand" evidence="8">
    <location>
        <begin position="7"/>
        <end position="13"/>
    </location>
</feature>
<feature type="helix" evidence="8">
    <location>
        <begin position="14"/>
        <end position="22"/>
    </location>
</feature>
<feature type="helix" evidence="8">
    <location>
        <begin position="24"/>
        <end position="26"/>
    </location>
</feature>
<feature type="helix" evidence="8">
    <location>
        <begin position="30"/>
        <end position="37"/>
    </location>
</feature>
<feature type="helix" evidence="8">
    <location>
        <begin position="42"/>
        <end position="48"/>
    </location>
</feature>
<feature type="helix" evidence="8">
    <location>
        <begin position="49"/>
        <end position="51"/>
    </location>
</feature>
<feature type="strand" evidence="8">
    <location>
        <begin position="56"/>
        <end position="61"/>
    </location>
</feature>
<feature type="helix" evidence="8">
    <location>
        <begin position="67"/>
        <end position="86"/>
    </location>
</feature>
<feature type="turn" evidence="8">
    <location>
        <begin position="91"/>
        <end position="93"/>
    </location>
</feature>
<feature type="helix" evidence="8">
    <location>
        <begin position="94"/>
        <end position="100"/>
    </location>
</feature>
<feature type="helix" evidence="8">
    <location>
        <begin position="102"/>
        <end position="117"/>
    </location>
</feature>
<feature type="helix" evidence="8">
    <location>
        <begin position="122"/>
        <end position="124"/>
    </location>
</feature>
<feature type="turn" evidence="8">
    <location>
        <begin position="125"/>
        <end position="128"/>
    </location>
</feature>
<feature type="strand" evidence="8">
    <location>
        <begin position="131"/>
        <end position="133"/>
    </location>
</feature>
<feature type="turn" evidence="8">
    <location>
        <begin position="139"/>
        <end position="142"/>
    </location>
</feature>
<feature type="helix" evidence="8">
    <location>
        <begin position="152"/>
        <end position="155"/>
    </location>
</feature>
<feature type="turn" evidence="8">
    <location>
        <begin position="159"/>
        <end position="163"/>
    </location>
</feature>
<feature type="helix" evidence="8">
    <location>
        <begin position="164"/>
        <end position="166"/>
    </location>
</feature>
<feature type="turn" evidence="8">
    <location>
        <begin position="169"/>
        <end position="175"/>
    </location>
</feature>
<feature type="helix" evidence="8">
    <location>
        <begin position="180"/>
        <end position="199"/>
    </location>
</feature>
<feature type="helix" evidence="8">
    <location>
        <begin position="203"/>
        <end position="206"/>
    </location>
</feature>
<feature type="helix" evidence="8">
    <location>
        <begin position="209"/>
        <end position="226"/>
    </location>
</feature>
<feature type="strand" evidence="8">
    <location>
        <begin position="227"/>
        <end position="230"/>
    </location>
</feature>
<feature type="helix" evidence="8">
    <location>
        <begin position="234"/>
        <end position="239"/>
    </location>
</feature>
<feature type="turn" evidence="8">
    <location>
        <begin position="246"/>
        <end position="250"/>
    </location>
</feature>
<feature type="helix" evidence="8">
    <location>
        <begin position="251"/>
        <end position="255"/>
    </location>
</feature>
<feature type="helix" evidence="8">
    <location>
        <begin position="261"/>
        <end position="266"/>
    </location>
</feature>
<feature type="turn" evidence="8">
    <location>
        <begin position="267"/>
        <end position="270"/>
    </location>
</feature>
<feature type="turn" evidence="8">
    <location>
        <begin position="272"/>
        <end position="276"/>
    </location>
</feature>
<feature type="strand" evidence="8">
    <location>
        <begin position="284"/>
        <end position="287"/>
    </location>
</feature>
<feature type="helix" evidence="8">
    <location>
        <begin position="290"/>
        <end position="303"/>
    </location>
</feature>
<feature type="helix" evidence="8">
    <location>
        <begin position="304"/>
        <end position="306"/>
    </location>
</feature>
<feature type="helix" evidence="8">
    <location>
        <begin position="313"/>
        <end position="337"/>
    </location>
</feature>
<dbReference type="EMBL" id="J04204">
    <property type="protein sequence ID" value="AAA64520.1"/>
    <property type="molecule type" value="mRNA"/>
</dbReference>
<dbReference type="EMBL" id="BC102305">
    <property type="protein sequence ID" value="AAI02306.1"/>
    <property type="molecule type" value="mRNA"/>
</dbReference>
<dbReference type="PIR" id="A32123">
    <property type="entry name" value="A32123"/>
</dbReference>
<dbReference type="RefSeq" id="NP_776930.1">
    <property type="nucleotide sequence ID" value="NM_174505.3"/>
</dbReference>
<dbReference type="PDB" id="6XBW">
    <property type="method" value="EM"/>
    <property type="resolution" value="3.37 A"/>
    <property type="chains" value="d=1-351"/>
</dbReference>
<dbReference type="PDB" id="6XBY">
    <property type="method" value="EM"/>
    <property type="resolution" value="3.79 A"/>
    <property type="chains" value="d=1-351"/>
</dbReference>
<dbReference type="PDB" id="7KHR">
    <property type="method" value="EM"/>
    <property type="resolution" value="3.62 A"/>
    <property type="chains" value="d=1-351"/>
</dbReference>
<dbReference type="PDBsum" id="6XBW"/>
<dbReference type="PDBsum" id="6XBY"/>
<dbReference type="PDBsum" id="7KHR"/>
<dbReference type="EMDB" id="EMD-22121"/>
<dbReference type="EMDB" id="EMD-22122"/>
<dbReference type="EMDB" id="EMD-22880"/>
<dbReference type="SMR" id="P61420"/>
<dbReference type="CORUM" id="P61420"/>
<dbReference type="FunCoup" id="P61420">
    <property type="interactions" value="4085"/>
</dbReference>
<dbReference type="STRING" id="9913.ENSBTAP00000064228"/>
<dbReference type="PaxDb" id="9913-ENSBTAP00000019346"/>
<dbReference type="GeneID" id="282148"/>
<dbReference type="KEGG" id="bta:282148"/>
<dbReference type="CTD" id="9114"/>
<dbReference type="VEuPathDB" id="HostDB:ENSBTAG00000014553"/>
<dbReference type="eggNOG" id="KOG2957">
    <property type="taxonomic scope" value="Eukaryota"/>
</dbReference>
<dbReference type="HOGENOM" id="CLU_051277_0_0_1"/>
<dbReference type="InParanoid" id="P61420"/>
<dbReference type="OMA" id="MTYGYMI"/>
<dbReference type="OrthoDB" id="10250083at2759"/>
<dbReference type="TreeFam" id="TF300857"/>
<dbReference type="Reactome" id="R-BTA-1222556">
    <property type="pathway name" value="ROS and RNS production in phagocytes"/>
</dbReference>
<dbReference type="Reactome" id="R-BTA-77387">
    <property type="pathway name" value="Insulin receptor recycling"/>
</dbReference>
<dbReference type="Reactome" id="R-BTA-917977">
    <property type="pathway name" value="Transferrin endocytosis and recycling"/>
</dbReference>
<dbReference type="Reactome" id="R-BTA-9639288">
    <property type="pathway name" value="Amino acids regulate mTORC1"/>
</dbReference>
<dbReference type="Reactome" id="R-BTA-983712">
    <property type="pathway name" value="Ion channel transport"/>
</dbReference>
<dbReference type="Proteomes" id="UP000009136">
    <property type="component" value="Chromosome 18"/>
</dbReference>
<dbReference type="Bgee" id="ENSBTAG00000014553">
    <property type="expression patterns" value="Expressed in Ammon's horn and 105 other cell types or tissues"/>
</dbReference>
<dbReference type="GO" id="GO:0030665">
    <property type="term" value="C:clathrin-coated vesicle membrane"/>
    <property type="evidence" value="ECO:0007669"/>
    <property type="project" value="UniProtKB-SubCell"/>
</dbReference>
<dbReference type="GO" id="GO:0005769">
    <property type="term" value="C:early endosome"/>
    <property type="evidence" value="ECO:0000318"/>
    <property type="project" value="GO_Central"/>
</dbReference>
<dbReference type="GO" id="GO:0005765">
    <property type="term" value="C:lysosomal membrane"/>
    <property type="evidence" value="ECO:0007669"/>
    <property type="project" value="UniProtKB-SubCell"/>
</dbReference>
<dbReference type="GO" id="GO:0033181">
    <property type="term" value="C:plasma membrane proton-transporting V-type ATPase complex"/>
    <property type="evidence" value="ECO:0000318"/>
    <property type="project" value="GO_Central"/>
</dbReference>
<dbReference type="GO" id="GO:0016471">
    <property type="term" value="C:vacuolar proton-transporting V-type ATPase complex"/>
    <property type="evidence" value="ECO:0000318"/>
    <property type="project" value="GO_Central"/>
</dbReference>
<dbReference type="GO" id="GO:0000220">
    <property type="term" value="C:vacuolar proton-transporting V-type ATPase, V0 domain"/>
    <property type="evidence" value="ECO:0000314"/>
    <property type="project" value="UniProtKB"/>
</dbReference>
<dbReference type="GO" id="GO:0046961">
    <property type="term" value="F:proton-transporting ATPase activity, rotational mechanism"/>
    <property type="evidence" value="ECO:0007669"/>
    <property type="project" value="InterPro"/>
</dbReference>
<dbReference type="GO" id="GO:0036295">
    <property type="term" value="P:cellular response to increased oxygen levels"/>
    <property type="evidence" value="ECO:0000250"/>
    <property type="project" value="UniProtKB"/>
</dbReference>
<dbReference type="GO" id="GO:0060271">
    <property type="term" value="P:cilium assembly"/>
    <property type="evidence" value="ECO:0000250"/>
    <property type="project" value="UniProtKB"/>
</dbReference>
<dbReference type="GO" id="GO:0006879">
    <property type="term" value="P:intracellular iron ion homeostasis"/>
    <property type="evidence" value="ECO:0000250"/>
    <property type="project" value="UniProtKB"/>
</dbReference>
<dbReference type="GO" id="GO:0045851">
    <property type="term" value="P:pH reduction"/>
    <property type="evidence" value="ECO:0000305"/>
    <property type="project" value="UniProtKB"/>
</dbReference>
<dbReference type="GO" id="GO:1902600">
    <property type="term" value="P:proton transmembrane transport"/>
    <property type="evidence" value="ECO:0000305"/>
    <property type="project" value="UniProtKB"/>
</dbReference>
<dbReference type="GO" id="GO:0007035">
    <property type="term" value="P:vacuolar acidification"/>
    <property type="evidence" value="ECO:0000318"/>
    <property type="project" value="GO_Central"/>
</dbReference>
<dbReference type="GO" id="GO:0007034">
    <property type="term" value="P:vacuolar transport"/>
    <property type="evidence" value="ECO:0000318"/>
    <property type="project" value="GO_Central"/>
</dbReference>
<dbReference type="FunFam" id="1.10.132.50:FF:000002">
    <property type="entry name" value="V-type proton ATPase subunit"/>
    <property type="match status" value="1"/>
</dbReference>
<dbReference type="FunFam" id="1.20.1690.10:FF:000001">
    <property type="entry name" value="V-type proton ATPase subunit"/>
    <property type="match status" value="1"/>
</dbReference>
<dbReference type="FunFam" id="1.20.1690.10:FF:000002">
    <property type="entry name" value="V-type proton ATPase subunit"/>
    <property type="match status" value="1"/>
</dbReference>
<dbReference type="Gene3D" id="1.10.132.50">
    <property type="entry name" value="ATP synthase (C/AC39) subunit, domain 3"/>
    <property type="match status" value="1"/>
</dbReference>
<dbReference type="Gene3D" id="1.20.1690.10">
    <property type="entry name" value="V-type ATP synthase subunit C domain"/>
    <property type="match status" value="2"/>
</dbReference>
<dbReference type="InterPro" id="IPR036079">
    <property type="entry name" value="ATPase_csu/dsu_sf"/>
</dbReference>
<dbReference type="InterPro" id="IPR002843">
    <property type="entry name" value="ATPase_V0-cplx_csu/dsu"/>
</dbReference>
<dbReference type="InterPro" id="IPR016727">
    <property type="entry name" value="ATPase_V0-cplx_dsu"/>
</dbReference>
<dbReference type="InterPro" id="IPR035067">
    <property type="entry name" value="V-type_ATPase_csu/dsu"/>
</dbReference>
<dbReference type="InterPro" id="IPR044911">
    <property type="entry name" value="V-type_ATPase_csu/dsu_dom_3"/>
</dbReference>
<dbReference type="PANTHER" id="PTHR11028">
    <property type="entry name" value="VACUOLAR ATP SYNTHASE SUBUNIT AC39"/>
    <property type="match status" value="1"/>
</dbReference>
<dbReference type="Pfam" id="PF01992">
    <property type="entry name" value="vATP-synt_AC39"/>
    <property type="match status" value="1"/>
</dbReference>
<dbReference type="PIRSF" id="PIRSF018497">
    <property type="entry name" value="V-ATP_synth_D"/>
    <property type="match status" value="1"/>
</dbReference>
<dbReference type="SUPFAM" id="SSF103486">
    <property type="entry name" value="V-type ATP synthase subunit C"/>
    <property type="match status" value="1"/>
</dbReference>
<sequence length="351" mass="40329">MSFFPELYFNVDNGYLEGLVRGLKAGVLSQADYLNLVQCETLEDLKLHLQSTDYGNFLANEASPLTVSVIDDRLKEKMVVEFRHMRNHAYEPLASFLDFITYSYMIDNVILLITGTLHQRSIAELVPKCHPLGSFEQMEAVNIAQTPAELYNAILVDTPLAAFFQDCISEQDLDEMNIEIIRNTLYKAYLESFYKFCTLLGGTTADAMCPILEFEADRRAFIITINSFGTELSKEDRAKLFPHCGRLYPEGLAQLARADDYEQVKNVADYYPEYKLLFEGAGSNPGDKTLEDRFFEHEVKLNKLAFLNQFHFGVFYAFVKLKEQECRNIVWIAECIAQRHRAKIDNYIPIF</sequence>
<name>VA0D1_BOVIN</name>
<evidence type="ECO:0000250" key="1">
    <source>
        <dbReference type="UniProtKB" id="P51863"/>
    </source>
</evidence>
<evidence type="ECO:0000250" key="2">
    <source>
        <dbReference type="UniProtKB" id="P61421"/>
    </source>
</evidence>
<evidence type="ECO:0000250" key="3">
    <source>
        <dbReference type="UniProtKB" id="Q6PGV1"/>
    </source>
</evidence>
<evidence type="ECO:0000269" key="4">
    <source>
    </source>
</evidence>
<evidence type="ECO:0000305" key="5"/>
<evidence type="ECO:0007744" key="6">
    <source>
        <dbReference type="PDB" id="6XBW"/>
    </source>
</evidence>
<evidence type="ECO:0007744" key="7">
    <source>
        <dbReference type="PDB" id="6XBY"/>
    </source>
</evidence>
<evidence type="ECO:0007829" key="8">
    <source>
        <dbReference type="PDB" id="6XBW"/>
    </source>
</evidence>
<organism>
    <name type="scientific">Bos taurus</name>
    <name type="common">Bovine</name>
    <dbReference type="NCBI Taxonomy" id="9913"/>
    <lineage>
        <taxon>Eukaryota</taxon>
        <taxon>Metazoa</taxon>
        <taxon>Chordata</taxon>
        <taxon>Craniata</taxon>
        <taxon>Vertebrata</taxon>
        <taxon>Euteleostomi</taxon>
        <taxon>Mammalia</taxon>
        <taxon>Eutheria</taxon>
        <taxon>Laurasiatheria</taxon>
        <taxon>Artiodactyla</taxon>
        <taxon>Ruminantia</taxon>
        <taxon>Pecora</taxon>
        <taxon>Bovidae</taxon>
        <taxon>Bovinae</taxon>
        <taxon>Bos</taxon>
    </lineage>
</organism>
<comment type="function">
    <text evidence="1 2 3 4">Subunit of the V0 complex of vacuolar(H+)-ATPase (V-ATPase), a multisubunit enzyme composed of a peripheral complex (V1) that hydrolyzes ATP and a membrane integral complex (V0) that translocates protons (PubMed:32764564). V-ATPase is responsible for acidifying and maintaining the pH of intracellular compartments and in some cell types, is targeted to the plasma membrane, where it is responsible for acidifying the extracellular environment (PubMed:32764564). May play a role in coupling of proton transport and ATP hydrolysis (By similarity). In aerobic conditions, involved in intracellular iron homeostasis, thus triggering the activity of Fe(2+) prolyl hydroxylase (PHD) enzymes, and leading to HIF1A hydroxylation and subsequent proteasomal degradation (By similarity). May play a role in cilium biogenesis through regulation of the transport and the localization of proteins to the cilium (By similarity).</text>
</comment>
<comment type="subunit">
    <text evidence="2 4">V-ATPase is a heteromultimeric enzyme made up of two complexes: the ATP-hydrolytic V1 complex and the proton translocation V0 complex (PubMed:32764564). The V1 complex consists of three catalytic AB heterodimers that form a heterohexamer, three peripheral stalks each consisting of EG heterodimers, one central rotor including subunits D and F, and the regulatory subunits C and H (PubMed:32764564). The proton translocation complex V0 consists of the proton transport subunit a, a ring of proteolipid subunits c9c'', rotary subunit d, subunits e and f, and the accessory subunits ATP6AP1/Ac45 and ATP6AP2/PRR (PubMed:32764564). Interacts with ATP6AP2; ATP6AP2 is a V-ATPase accessory protein and the interaction promotes v-ATPase complex assembly (PubMed:32764564). Interacts with TMEM9; TMEM9 is a v-ATPase assembly regulator and the interaction induces the interaction with ATP6AP2 (By similarity). Interacts with PIP4P1 (By similarity).</text>
</comment>
<comment type="subcellular location">
    <subcellularLocation>
        <location evidence="2">Membrane</location>
        <topology evidence="2">Peripheral membrane protein</topology>
        <orientation evidence="2">Cytoplasmic side</orientation>
    </subcellularLocation>
    <subcellularLocation>
        <location evidence="2">Lysosome membrane</location>
        <topology evidence="5">Peripheral membrane protein</topology>
    </subcellularLocation>
    <subcellularLocation>
        <location evidence="4">Cytoplasmic vesicle</location>
        <location evidence="4">Clathrin-coated vesicle membrane</location>
        <topology evidence="5">Peripheral membrane protein</topology>
    </subcellularLocation>
    <text evidence="3">Localizes to centrosome and the base of the cilium.</text>
</comment>
<comment type="tissue specificity">
    <text evidence="4">Expressed in brain (at protein level).</text>
</comment>
<comment type="PTM">
    <text>The N-terminus is blocked.</text>
</comment>
<comment type="similarity">
    <text evidence="5">Belongs to the V-ATPase V0D/AC39 subunit family.</text>
</comment>
<proteinExistence type="evidence at protein level"/>
<protein>
    <recommendedName>
        <fullName>V-type proton ATPase subunit d 1</fullName>
        <shortName>V-ATPase subunit d 1</shortName>
    </recommendedName>
    <alternativeName>
        <fullName>32 kDa accessory protein</fullName>
    </alternativeName>
    <alternativeName>
        <fullName>P39</fullName>
    </alternativeName>
    <alternativeName>
        <fullName>V-ATPase 40 kDa accessory protein</fullName>
    </alternativeName>
    <alternativeName>
        <fullName>V-ATPase AC39 subunit</fullName>
    </alternativeName>
    <alternativeName>
        <fullName>Vacuolar proton pump subunit d 1</fullName>
    </alternativeName>
</protein>
<reference key="1">
    <citation type="journal article" date="1988" name="J. Biol. Chem.">
        <title>Cloning of cDNA encoding a 32-kDa protein. An accessory polypeptide of the H+-ATPase from chromaffin granules.</title>
        <authorList>
            <person name="Wang S.-Y."/>
            <person name="Moriyama Y."/>
            <person name="Mandel M."/>
            <person name="Hulmes J.D."/>
            <person name="Pan Y.-C.E."/>
            <person name="Danho W."/>
            <person name="Nelson H."/>
            <person name="Nelson N."/>
        </authorList>
    </citation>
    <scope>NUCLEOTIDE SEQUENCE [MRNA]</scope>
    <scope>PARTIAL PROTEIN SEQUENCE</scope>
    <source>
        <tissue>Adrenal medulla</tissue>
    </source>
</reference>
<reference key="2">
    <citation type="submission" date="2005-08" db="EMBL/GenBank/DDBJ databases">
        <authorList>
            <consortium name="NIH - Mammalian Gene Collection (MGC) project"/>
        </authorList>
    </citation>
    <scope>NUCLEOTIDE SEQUENCE [LARGE SCALE MRNA]</scope>
    <source>
        <strain>Crossbred X Angus</strain>
        <tissue>Ileum</tissue>
    </source>
</reference>
<reference evidence="6 7" key="3">
    <citation type="journal article" date="2020" name="Nat. Commun.">
        <title>Cryo-EM structures of intact V-ATPase from bovine brain.</title>
        <authorList>
            <person name="Wang R."/>
            <person name="Long T."/>
            <person name="Hassan A."/>
            <person name="Wang J."/>
            <person name="Sun Y."/>
            <person name="Xie X.S."/>
            <person name="Li X."/>
        </authorList>
    </citation>
    <scope>STRUCTURE BY ELECTRON MICROSCOPY (3.37 ANGSTROMS)</scope>
    <scope>FUNCTION</scope>
    <scope>IDENTIFICATION IN THE V-ATPASE COMPLEX</scope>
    <scope>SUBCELLULAR LOCATION</scope>
    <scope>IDENTIFICATION BY MASS SPECTROMETRY</scope>
    <scope>TISSUE SPECIFICITY</scope>
</reference>
<keyword id="KW-0002">3D-structure</keyword>
<keyword id="KW-0970">Cilium biogenesis/degradation</keyword>
<keyword id="KW-0968">Cytoplasmic vesicle</keyword>
<keyword id="KW-0903">Direct protein sequencing</keyword>
<keyword id="KW-0375">Hydrogen ion transport</keyword>
<keyword id="KW-0406">Ion transport</keyword>
<keyword id="KW-0458">Lysosome</keyword>
<keyword id="KW-0472">Membrane</keyword>
<keyword id="KW-0597">Phosphoprotein</keyword>
<keyword id="KW-1185">Reference proteome</keyword>
<keyword id="KW-0813">Transport</keyword>
<accession>P61420</accession>
<accession>P12953</accession>
<accession>Q02547</accession>
<accession>Q3T0P9</accession>